<proteinExistence type="inferred from homology"/>
<gene>
    <name evidence="1" type="primary">rpsQ</name>
    <name type="ordered locus">Lm4b_02590</name>
</gene>
<keyword id="KW-0687">Ribonucleoprotein</keyword>
<keyword id="KW-0689">Ribosomal protein</keyword>
<keyword id="KW-0694">RNA-binding</keyword>
<keyword id="KW-0699">rRNA-binding</keyword>
<organism>
    <name type="scientific">Listeria monocytogenes serotype 4b (strain CLIP80459)</name>
    <dbReference type="NCBI Taxonomy" id="568819"/>
    <lineage>
        <taxon>Bacteria</taxon>
        <taxon>Bacillati</taxon>
        <taxon>Bacillota</taxon>
        <taxon>Bacilli</taxon>
        <taxon>Bacillales</taxon>
        <taxon>Listeriaceae</taxon>
        <taxon>Listeria</taxon>
    </lineage>
</organism>
<protein>
    <recommendedName>
        <fullName evidence="1">Small ribosomal subunit protein uS17</fullName>
    </recommendedName>
    <alternativeName>
        <fullName evidence="2">30S ribosomal protein S17</fullName>
    </alternativeName>
</protein>
<reference key="1">
    <citation type="journal article" date="2012" name="BMC Genomics">
        <title>Comparative genomics and transcriptomics of lineages I, II, and III strains of Listeria monocytogenes.</title>
        <authorList>
            <person name="Hain T."/>
            <person name="Ghai R."/>
            <person name="Billion A."/>
            <person name="Kuenne C.T."/>
            <person name="Steinweg C."/>
            <person name="Izar B."/>
            <person name="Mohamed W."/>
            <person name="Mraheil M."/>
            <person name="Domann E."/>
            <person name="Schaffrath S."/>
            <person name="Karst U."/>
            <person name="Goesmann A."/>
            <person name="Oehm S."/>
            <person name="Puhler A."/>
            <person name="Merkl R."/>
            <person name="Vorwerk S."/>
            <person name="Glaser P."/>
            <person name="Garrido P."/>
            <person name="Rusniok C."/>
            <person name="Buchrieser C."/>
            <person name="Goebel W."/>
            <person name="Chakraborty T."/>
        </authorList>
    </citation>
    <scope>NUCLEOTIDE SEQUENCE [LARGE SCALE GENOMIC DNA]</scope>
    <source>
        <strain>CLIP80459</strain>
    </source>
</reference>
<evidence type="ECO:0000255" key="1">
    <source>
        <dbReference type="HAMAP-Rule" id="MF_01345"/>
    </source>
</evidence>
<evidence type="ECO:0000305" key="2"/>
<sequence length="87" mass="10036">MADRNQRKVYTGRVVSDKMDKTITVVVETYKKHGLYGKRVKYSKKFKAHDENNIAKTGDVVRISETRPLSATKHFRLLEVVEEAVII</sequence>
<accession>C1KZH1</accession>
<name>RS17_LISMC</name>
<comment type="function">
    <text evidence="1">One of the primary rRNA binding proteins, it binds specifically to the 5'-end of 16S ribosomal RNA.</text>
</comment>
<comment type="subunit">
    <text evidence="1">Part of the 30S ribosomal subunit.</text>
</comment>
<comment type="similarity">
    <text evidence="1">Belongs to the universal ribosomal protein uS17 family.</text>
</comment>
<feature type="chain" id="PRO_1000214790" description="Small ribosomal subunit protein uS17">
    <location>
        <begin position="1"/>
        <end position="87"/>
    </location>
</feature>
<dbReference type="EMBL" id="FM242711">
    <property type="protein sequence ID" value="CAS06344.1"/>
    <property type="molecule type" value="Genomic_DNA"/>
</dbReference>
<dbReference type="RefSeq" id="WP_003720941.1">
    <property type="nucleotide sequence ID" value="NC_012488.1"/>
</dbReference>
<dbReference type="SMR" id="C1KZH1"/>
<dbReference type="GeneID" id="93240504"/>
<dbReference type="KEGG" id="lmc:Lm4b_02590"/>
<dbReference type="HOGENOM" id="CLU_073626_1_0_9"/>
<dbReference type="GO" id="GO:0022627">
    <property type="term" value="C:cytosolic small ribosomal subunit"/>
    <property type="evidence" value="ECO:0007669"/>
    <property type="project" value="TreeGrafter"/>
</dbReference>
<dbReference type="GO" id="GO:0019843">
    <property type="term" value="F:rRNA binding"/>
    <property type="evidence" value="ECO:0007669"/>
    <property type="project" value="UniProtKB-UniRule"/>
</dbReference>
<dbReference type="GO" id="GO:0003735">
    <property type="term" value="F:structural constituent of ribosome"/>
    <property type="evidence" value="ECO:0007669"/>
    <property type="project" value="InterPro"/>
</dbReference>
<dbReference type="GO" id="GO:0006412">
    <property type="term" value="P:translation"/>
    <property type="evidence" value="ECO:0007669"/>
    <property type="project" value="UniProtKB-UniRule"/>
</dbReference>
<dbReference type="CDD" id="cd00364">
    <property type="entry name" value="Ribosomal_uS17"/>
    <property type="match status" value="1"/>
</dbReference>
<dbReference type="FunFam" id="2.40.50.140:FF:000026">
    <property type="entry name" value="30S ribosomal protein S17"/>
    <property type="match status" value="1"/>
</dbReference>
<dbReference type="Gene3D" id="2.40.50.140">
    <property type="entry name" value="Nucleic acid-binding proteins"/>
    <property type="match status" value="1"/>
</dbReference>
<dbReference type="HAMAP" id="MF_01345_B">
    <property type="entry name" value="Ribosomal_uS17_B"/>
    <property type="match status" value="1"/>
</dbReference>
<dbReference type="InterPro" id="IPR012340">
    <property type="entry name" value="NA-bd_OB-fold"/>
</dbReference>
<dbReference type="InterPro" id="IPR000266">
    <property type="entry name" value="Ribosomal_uS17"/>
</dbReference>
<dbReference type="InterPro" id="IPR019984">
    <property type="entry name" value="Ribosomal_uS17_bact/chlr"/>
</dbReference>
<dbReference type="InterPro" id="IPR019979">
    <property type="entry name" value="Ribosomal_uS17_CS"/>
</dbReference>
<dbReference type="NCBIfam" id="NF004123">
    <property type="entry name" value="PRK05610.1"/>
    <property type="match status" value="1"/>
</dbReference>
<dbReference type="NCBIfam" id="TIGR03635">
    <property type="entry name" value="uS17_bact"/>
    <property type="match status" value="1"/>
</dbReference>
<dbReference type="PANTHER" id="PTHR10744">
    <property type="entry name" value="40S RIBOSOMAL PROTEIN S11 FAMILY MEMBER"/>
    <property type="match status" value="1"/>
</dbReference>
<dbReference type="PANTHER" id="PTHR10744:SF1">
    <property type="entry name" value="SMALL RIBOSOMAL SUBUNIT PROTEIN US17M"/>
    <property type="match status" value="1"/>
</dbReference>
<dbReference type="Pfam" id="PF00366">
    <property type="entry name" value="Ribosomal_S17"/>
    <property type="match status" value="1"/>
</dbReference>
<dbReference type="PRINTS" id="PR00973">
    <property type="entry name" value="RIBOSOMALS17"/>
</dbReference>
<dbReference type="SUPFAM" id="SSF50249">
    <property type="entry name" value="Nucleic acid-binding proteins"/>
    <property type="match status" value="1"/>
</dbReference>
<dbReference type="PROSITE" id="PS00056">
    <property type="entry name" value="RIBOSOMAL_S17"/>
    <property type="match status" value="1"/>
</dbReference>